<comment type="function">
    <text evidence="4">Polymerizes chitin, a structural polymer of the cell wall and septum, by transferring the sugar moiety of UDP-GlcNAc to the non-reducing end of the growing chitin polymer.</text>
</comment>
<comment type="catalytic activity">
    <reaction>
        <text>[(1-&gt;4)-N-acetyl-beta-D-glucosaminyl](n) + UDP-N-acetyl-alpha-D-glucosamine = [(1-&gt;4)-N-acetyl-beta-D-glucosaminyl](n+1) + UDP + H(+)</text>
        <dbReference type="Rhea" id="RHEA:16637"/>
        <dbReference type="Rhea" id="RHEA-COMP:9593"/>
        <dbReference type="Rhea" id="RHEA-COMP:9595"/>
        <dbReference type="ChEBI" id="CHEBI:15378"/>
        <dbReference type="ChEBI" id="CHEBI:17029"/>
        <dbReference type="ChEBI" id="CHEBI:57705"/>
        <dbReference type="ChEBI" id="CHEBI:58223"/>
        <dbReference type="EC" id="2.4.1.16"/>
    </reaction>
</comment>
<comment type="subcellular location">
    <subcellularLocation>
        <location evidence="4">Cell membrane</location>
        <topology evidence="1">Multi-pass membrane protein</topology>
    </subcellularLocation>
</comment>
<comment type="similarity">
    <text evidence="4">Belongs to the chitin synthase family. Class IV subfamily.</text>
</comment>
<sequence>MSNFRDSSSPRRGYSEFDPESGEGLGRKKSLIRPERSRMDESHPRFHYTQVANQESNHIKVQPSSTGVDPRKSNELSTSRSHLSNYATPPHQEEEEDEGIPLMDIHNASPNVSSDQNNDLKGGREVYGLNDEINDYGSSPKKNQVISSSRPMNNEKPAKPKHDIYFWKVYCYAITFWAPAPLLKLFGLPTKDRQFAWREKIGLISCILYVGAFVAYLTFGFTKTVCSSQVVRTQINHVNGGYLIINGRAYDLTSSQHPKAAGIQAGSNVLYPPMNAGGKDASFLFQNVNGNCKGLIKPRDNCSIPYDGDELAWYMPCRLFNQDGSTKPNNTFAYYKGWACHTSETARDAYYKLKVNGDVYFTWDDVKNSSRNLVVYSGNVLDLDLINWIETDDVTYPELFDKLRDDETYRGLDISLVLTNSEERQAARCLTEIIKVGSIDTDTIGCIASKVVLYMSLVFILSVVVVKFIMACWFKWVTSRKQGATMYDSKAWAKRNREIEDWVDHDHGIGAEVKTVPVKARANYKAAKTNRQSVFHRAQKLSLGPNADLSQYYDNPNALSKTFKYTTMSTQAALLGRNGYGKRGNNANKSVSGGFNGRQSNLYLTDQGSSTDLLNRPVSSYNPFDSMGDDSIVINGLSPDIIHPDVVPQPPVEYQPFGYPLAHTINLVTCYSEDEEGIRITLDSIATTDYPNSHKLILVICDGIIKGSGNDETTPDIVLDMMSDLTVPRDEVEAYSYVAVAQGSKRHNMAKVYAGFYKYNDETVPPEKQQRIPMITIVKCGTPEEASAPKPGNRGKRDSQIILMSFLQKVVFDERMTSLEYEMLQSIWRITGLMAEFYEIVLMVDADTKVFPDSLTHMVAEMVKDPTIMGLCGETKISNKAQTWVTAIQVFEYYISHHQAKAFESIFGGVTCLPGCFCMYRIKAPKGSDGYWVPILANPDIVERYSDNVVDTLHRKNLLLLGEDRYLSSLMLRTFPTRKQVFVPKAACKTVVPDKFKVLLSQRRRWINSTVHNLFELVLVKDLCGTFCFSMQFVIFIELIGTLVLPAAITFTIYVIIVAIVSKPTPVMSLVLLAVIFGLPGCLIVITVSSLSYLVYFVIYLFALPIWNFVLPSYAYWKFDDFSWGETRTVAGGDKGDHSAVEGKFDSSKIAMKRWREWERERRSTENRKQQQQQQLTNNSSNNLAVPGAAWDPSNTGGNLIDDLSQGSSSGSS</sequence>
<name>CHS3_CANAX</name>
<dbReference type="EC" id="2.4.1.16"/>
<dbReference type="EMBL" id="D13454">
    <property type="protein sequence ID" value="BAA02707.1"/>
    <property type="molecule type" value="Genomic_DNA"/>
</dbReference>
<dbReference type="PIR" id="S39951">
    <property type="entry name" value="S39951"/>
</dbReference>
<dbReference type="BindingDB" id="P30573"/>
<dbReference type="ChEMBL" id="CHEMBL2366568"/>
<dbReference type="CAZy" id="GT2">
    <property type="family name" value="Glycosyltransferase Family 2"/>
</dbReference>
<dbReference type="GlyCosmos" id="P30573">
    <property type="glycosylation" value="2 sites, No reported glycans"/>
</dbReference>
<dbReference type="EnsemblFungi" id="C1_13110C_A-T">
    <property type="protein sequence ID" value="C1_13110C_A-T-p1"/>
    <property type="gene ID" value="C1_13110C_A"/>
</dbReference>
<dbReference type="CGD" id="CAL0000195982">
    <property type="gene designation" value="CHS3"/>
</dbReference>
<dbReference type="VEuPathDB" id="FungiDB:C1_13110C_A"/>
<dbReference type="VEuPathDB" id="FungiDB:CAWG_00138"/>
<dbReference type="PhylomeDB" id="P30573"/>
<dbReference type="BRENDA" id="2.4.1.16">
    <property type="organism ID" value="1096"/>
</dbReference>
<dbReference type="PHI-base" id="PHI:31"/>
<dbReference type="PHI-base" id="PHI:7234"/>
<dbReference type="GO" id="GO:0030428">
    <property type="term" value="C:cell septum"/>
    <property type="evidence" value="ECO:0000314"/>
    <property type="project" value="CGD"/>
</dbReference>
<dbReference type="GO" id="GO:0005935">
    <property type="term" value="C:cellular bud neck"/>
    <property type="evidence" value="ECO:0007669"/>
    <property type="project" value="EnsemblFungi"/>
</dbReference>
<dbReference type="GO" id="GO:0045009">
    <property type="term" value="C:chitosome"/>
    <property type="evidence" value="ECO:0007669"/>
    <property type="project" value="EnsemblFungi"/>
</dbReference>
<dbReference type="GO" id="GO:1903561">
    <property type="term" value="C:extracellular vesicle"/>
    <property type="evidence" value="ECO:0000314"/>
    <property type="project" value="CGD"/>
</dbReference>
<dbReference type="GO" id="GO:0000131">
    <property type="term" value="C:incipient cellular bud site"/>
    <property type="evidence" value="ECO:0007669"/>
    <property type="project" value="EnsemblFungi"/>
</dbReference>
<dbReference type="GO" id="GO:0005886">
    <property type="term" value="C:plasma membrane"/>
    <property type="evidence" value="ECO:0007669"/>
    <property type="project" value="UniProtKB-SubCell"/>
</dbReference>
<dbReference type="GO" id="GO:0005628">
    <property type="term" value="C:prospore membrane"/>
    <property type="evidence" value="ECO:0007669"/>
    <property type="project" value="EnsemblFungi"/>
</dbReference>
<dbReference type="GO" id="GO:0004100">
    <property type="term" value="F:chitin synthase activity"/>
    <property type="evidence" value="ECO:0000315"/>
    <property type="project" value="CGD"/>
</dbReference>
<dbReference type="GO" id="GO:0030476">
    <property type="term" value="P:ascospore wall assembly"/>
    <property type="evidence" value="ECO:0007669"/>
    <property type="project" value="EnsemblFungi"/>
</dbReference>
<dbReference type="GO" id="GO:0071260">
    <property type="term" value="P:cellular response to mechanical stimulus"/>
    <property type="evidence" value="ECO:0000315"/>
    <property type="project" value="CGD"/>
</dbReference>
<dbReference type="GO" id="GO:0006031">
    <property type="term" value="P:chitin biosynthetic process"/>
    <property type="evidence" value="ECO:0000315"/>
    <property type="project" value="CGD"/>
</dbReference>
<dbReference type="GO" id="GO:0030448">
    <property type="term" value="P:hyphal growth"/>
    <property type="evidence" value="ECO:0000315"/>
    <property type="project" value="CGD"/>
</dbReference>
<dbReference type="GO" id="GO:0097271">
    <property type="term" value="P:protein localization to bud neck"/>
    <property type="evidence" value="ECO:0007669"/>
    <property type="project" value="EnsemblFungi"/>
</dbReference>
<dbReference type="CDD" id="cd04190">
    <property type="entry name" value="Chitin_synth_C"/>
    <property type="match status" value="1"/>
</dbReference>
<dbReference type="Gene3D" id="3.90.550.10">
    <property type="entry name" value="Spore Coat Polysaccharide Biosynthesis Protein SpsA, Chain A"/>
    <property type="match status" value="1"/>
</dbReference>
<dbReference type="InterPro" id="IPR004835">
    <property type="entry name" value="Chitin_synth"/>
</dbReference>
<dbReference type="InterPro" id="IPR054295">
    <property type="entry name" value="CHS4-like_dom"/>
</dbReference>
<dbReference type="InterPro" id="IPR029044">
    <property type="entry name" value="Nucleotide-diphossugar_trans"/>
</dbReference>
<dbReference type="PANTHER" id="PTHR22914">
    <property type="entry name" value="CHITIN SYNTHASE"/>
    <property type="match status" value="1"/>
</dbReference>
<dbReference type="PANTHER" id="PTHR22914:SF16">
    <property type="entry name" value="CHITIN SYNTHASE 3"/>
    <property type="match status" value="1"/>
</dbReference>
<dbReference type="Pfam" id="PF03142">
    <property type="entry name" value="Chitin_synth_2"/>
    <property type="match status" value="1"/>
</dbReference>
<dbReference type="Pfam" id="PF22997">
    <property type="entry name" value="CHS4"/>
    <property type="match status" value="1"/>
</dbReference>
<dbReference type="SUPFAM" id="SSF53448">
    <property type="entry name" value="Nucleotide-diphospho-sugar transferases"/>
    <property type="match status" value="1"/>
</dbReference>
<reference key="1">
    <citation type="journal article" date="1993" name="Mol. Gen. Genet.">
        <title>Cloning of the chitin synthase 3 gene from Candida albicans and its expression during yeast-hyphal transition.</title>
        <authorList>
            <person name="Sudoh M."/>
            <person name="Nagahashi S."/>
            <person name="Arisawa M."/>
            <person name="Takagi M."/>
        </authorList>
    </citation>
    <scope>NUCLEOTIDE SEQUENCE [GENOMIC DNA]</scope>
</reference>
<accession>P30573</accession>
<organism>
    <name type="scientific">Candida albicans</name>
    <name type="common">Yeast</name>
    <dbReference type="NCBI Taxonomy" id="5476"/>
    <lineage>
        <taxon>Eukaryota</taxon>
        <taxon>Fungi</taxon>
        <taxon>Dikarya</taxon>
        <taxon>Ascomycota</taxon>
        <taxon>Saccharomycotina</taxon>
        <taxon>Pichiomycetes</taxon>
        <taxon>Debaryomycetaceae</taxon>
        <taxon>Candida/Lodderomyces clade</taxon>
        <taxon>Candida</taxon>
    </lineage>
</organism>
<proteinExistence type="inferred from homology"/>
<evidence type="ECO:0000255" key="1"/>
<evidence type="ECO:0000255" key="2">
    <source>
        <dbReference type="PROSITE-ProRule" id="PRU00498"/>
    </source>
</evidence>
<evidence type="ECO:0000256" key="3">
    <source>
        <dbReference type="SAM" id="MobiDB-lite"/>
    </source>
</evidence>
<evidence type="ECO:0000305" key="4"/>
<protein>
    <recommendedName>
        <fullName>Chitin synthase 3</fullName>
        <ecNumber>2.4.1.16</ecNumber>
    </recommendedName>
    <alternativeName>
        <fullName>Chitin-UDP acetyl-glucosaminyl transferase 3</fullName>
    </alternativeName>
    <alternativeName>
        <fullName>Class-IV chitin synthase 3</fullName>
    </alternativeName>
</protein>
<feature type="chain" id="PRO_0000193688" description="Chitin synthase 3">
    <location>
        <begin position="1"/>
        <end position="1213"/>
    </location>
</feature>
<feature type="topological domain" description="Cytoplasmic" evidence="4">
    <location>
        <begin position="1"/>
        <end position="168"/>
    </location>
</feature>
<feature type="transmembrane region" description="Helical" evidence="1">
    <location>
        <begin position="169"/>
        <end position="189"/>
    </location>
</feature>
<feature type="topological domain" description="Extracellular" evidence="4">
    <location>
        <begin position="190"/>
        <end position="200"/>
    </location>
</feature>
<feature type="transmembrane region" description="Helical" evidence="1">
    <location>
        <begin position="201"/>
        <end position="221"/>
    </location>
</feature>
<feature type="topological domain" description="Cytoplasmic" evidence="4">
    <location>
        <begin position="222"/>
        <end position="450"/>
    </location>
</feature>
<feature type="transmembrane region" description="Helical" evidence="1">
    <location>
        <begin position="451"/>
        <end position="471"/>
    </location>
</feature>
<feature type="topological domain" description="Extracellular" evidence="4">
    <location>
        <begin position="472"/>
        <end position="1016"/>
    </location>
</feature>
<feature type="transmembrane region" description="Helical" evidence="1">
    <location>
        <begin position="1017"/>
        <end position="1037"/>
    </location>
</feature>
<feature type="topological domain" description="Cytoplasmic" evidence="4">
    <location>
        <begin position="1038"/>
        <end position="1039"/>
    </location>
</feature>
<feature type="transmembrane region" description="Helical" evidence="1">
    <location>
        <begin position="1040"/>
        <end position="1060"/>
    </location>
</feature>
<feature type="topological domain" description="Extracellular" evidence="4">
    <location>
        <begin position="1061"/>
        <end position="1065"/>
    </location>
</feature>
<feature type="transmembrane region" description="Helical" evidence="1">
    <location>
        <begin position="1066"/>
        <end position="1086"/>
    </location>
</feature>
<feature type="topological domain" description="Cytoplasmic" evidence="4">
    <location>
        <begin position="1087"/>
        <end position="1213"/>
    </location>
</feature>
<feature type="region of interest" description="Disordered" evidence="3">
    <location>
        <begin position="1"/>
        <end position="97"/>
    </location>
</feature>
<feature type="region of interest" description="Disordered" evidence="3">
    <location>
        <begin position="1161"/>
        <end position="1213"/>
    </location>
</feature>
<feature type="compositionally biased region" description="Basic and acidic residues" evidence="3">
    <location>
        <begin position="32"/>
        <end position="44"/>
    </location>
</feature>
<feature type="compositionally biased region" description="Polar residues" evidence="3">
    <location>
        <begin position="75"/>
        <end position="87"/>
    </location>
</feature>
<feature type="glycosylation site" description="N-linked (GlcNAc...) asparagine" evidence="2">
    <location>
        <position position="588"/>
    </location>
</feature>
<feature type="glycosylation site" description="N-linked (GlcNAc...) asparagine" evidence="2">
    <location>
        <position position="1008"/>
    </location>
</feature>
<gene>
    <name type="primary">CHS3</name>
</gene>
<keyword id="KW-1003">Cell membrane</keyword>
<keyword id="KW-0961">Cell wall biogenesis/degradation</keyword>
<keyword id="KW-0325">Glycoprotein</keyword>
<keyword id="KW-0328">Glycosyltransferase</keyword>
<keyword id="KW-0472">Membrane</keyword>
<keyword id="KW-0808">Transferase</keyword>
<keyword id="KW-0812">Transmembrane</keyword>
<keyword id="KW-1133">Transmembrane helix</keyword>